<keyword id="KW-1185">Reference proteome</keyword>
<keyword id="KW-0687">Ribonucleoprotein</keyword>
<keyword id="KW-0689">Ribosomal protein</keyword>
<keyword id="KW-0694">RNA-binding</keyword>
<keyword id="KW-0699">rRNA-binding</keyword>
<sequence length="147" mass="15466">MSLRLNDLKPALGASSSRARVGRGIGSGLGKTAGRGHKGSFARKGGGKIKPGFEGGQTPMQRRLPKIGFRSRSVANTAEVLSYKLDNLEPGEIDFASLRLAKLVPSTAKKAKIVKKGRLTKVFVLKGIESTAGARAMIEATGGSFQE</sequence>
<gene>
    <name evidence="1" type="primary">rplO</name>
    <name type="ordered locus">PD_0456</name>
</gene>
<name>RL15_XYLFT</name>
<accession>Q87E63</accession>
<protein>
    <recommendedName>
        <fullName evidence="1">Large ribosomal subunit protein uL15</fullName>
    </recommendedName>
    <alternativeName>
        <fullName evidence="3">50S ribosomal protein L15</fullName>
    </alternativeName>
</protein>
<organism>
    <name type="scientific">Xylella fastidiosa (strain Temecula1 / ATCC 700964)</name>
    <dbReference type="NCBI Taxonomy" id="183190"/>
    <lineage>
        <taxon>Bacteria</taxon>
        <taxon>Pseudomonadati</taxon>
        <taxon>Pseudomonadota</taxon>
        <taxon>Gammaproteobacteria</taxon>
        <taxon>Lysobacterales</taxon>
        <taxon>Lysobacteraceae</taxon>
        <taxon>Xylella</taxon>
    </lineage>
</organism>
<feature type="chain" id="PRO_0000251592" description="Large ribosomal subunit protein uL15">
    <location>
        <begin position="1"/>
        <end position="147"/>
    </location>
</feature>
<feature type="region of interest" description="Disordered" evidence="2">
    <location>
        <begin position="16"/>
        <end position="63"/>
    </location>
</feature>
<feature type="compositionally biased region" description="Gly residues" evidence="2">
    <location>
        <begin position="23"/>
        <end position="33"/>
    </location>
</feature>
<feature type="compositionally biased region" description="Basic residues" evidence="2">
    <location>
        <begin position="34"/>
        <end position="47"/>
    </location>
</feature>
<reference key="1">
    <citation type="journal article" date="2003" name="J. Bacteriol.">
        <title>Comparative analyses of the complete genome sequences of Pierce's disease and citrus variegated chlorosis strains of Xylella fastidiosa.</title>
        <authorList>
            <person name="Van Sluys M.A."/>
            <person name="de Oliveira M.C."/>
            <person name="Monteiro-Vitorello C.B."/>
            <person name="Miyaki C.Y."/>
            <person name="Furlan L.R."/>
            <person name="Camargo L.E.A."/>
            <person name="da Silva A.C.R."/>
            <person name="Moon D.H."/>
            <person name="Takita M.A."/>
            <person name="Lemos E.G.M."/>
            <person name="Machado M.A."/>
            <person name="Ferro M.I.T."/>
            <person name="da Silva F.R."/>
            <person name="Goldman M.H.S."/>
            <person name="Goldman G.H."/>
            <person name="Lemos M.V.F."/>
            <person name="El-Dorry H."/>
            <person name="Tsai S.M."/>
            <person name="Carrer H."/>
            <person name="Carraro D.M."/>
            <person name="de Oliveira R.C."/>
            <person name="Nunes L.R."/>
            <person name="Siqueira W.J."/>
            <person name="Coutinho L.L."/>
            <person name="Kimura E.T."/>
            <person name="Ferro E.S."/>
            <person name="Harakava R."/>
            <person name="Kuramae E.E."/>
            <person name="Marino C.L."/>
            <person name="Giglioti E."/>
            <person name="Abreu I.L."/>
            <person name="Alves L.M.C."/>
            <person name="do Amaral A.M."/>
            <person name="Baia G.S."/>
            <person name="Blanco S.R."/>
            <person name="Brito M.S."/>
            <person name="Cannavan F.S."/>
            <person name="Celestino A.V."/>
            <person name="da Cunha A.F."/>
            <person name="Fenille R.C."/>
            <person name="Ferro J.A."/>
            <person name="Formighieri E.F."/>
            <person name="Kishi L.T."/>
            <person name="Leoni S.G."/>
            <person name="Oliveira A.R."/>
            <person name="Rosa V.E. Jr."/>
            <person name="Sassaki F.T."/>
            <person name="Sena J.A.D."/>
            <person name="de Souza A.A."/>
            <person name="Truffi D."/>
            <person name="Tsukumo F."/>
            <person name="Yanai G.M."/>
            <person name="Zaros L.G."/>
            <person name="Civerolo E.L."/>
            <person name="Simpson A.J.G."/>
            <person name="Almeida N.F. Jr."/>
            <person name="Setubal J.C."/>
            <person name="Kitajima J.P."/>
        </authorList>
    </citation>
    <scope>NUCLEOTIDE SEQUENCE [LARGE SCALE GENOMIC DNA]</scope>
    <source>
        <strain>Temecula1 / ATCC 700964</strain>
    </source>
</reference>
<proteinExistence type="inferred from homology"/>
<dbReference type="EMBL" id="AE009442">
    <property type="protein sequence ID" value="AAO28335.1"/>
    <property type="molecule type" value="Genomic_DNA"/>
</dbReference>
<dbReference type="RefSeq" id="WP_004090129.1">
    <property type="nucleotide sequence ID" value="NC_004556.1"/>
</dbReference>
<dbReference type="SMR" id="Q87E63"/>
<dbReference type="GeneID" id="93904158"/>
<dbReference type="KEGG" id="xft:PD_0456"/>
<dbReference type="HOGENOM" id="CLU_055188_4_2_6"/>
<dbReference type="Proteomes" id="UP000002516">
    <property type="component" value="Chromosome"/>
</dbReference>
<dbReference type="GO" id="GO:0022625">
    <property type="term" value="C:cytosolic large ribosomal subunit"/>
    <property type="evidence" value="ECO:0007669"/>
    <property type="project" value="TreeGrafter"/>
</dbReference>
<dbReference type="GO" id="GO:0019843">
    <property type="term" value="F:rRNA binding"/>
    <property type="evidence" value="ECO:0007669"/>
    <property type="project" value="UniProtKB-UniRule"/>
</dbReference>
<dbReference type="GO" id="GO:0003735">
    <property type="term" value="F:structural constituent of ribosome"/>
    <property type="evidence" value="ECO:0007669"/>
    <property type="project" value="InterPro"/>
</dbReference>
<dbReference type="GO" id="GO:0006412">
    <property type="term" value="P:translation"/>
    <property type="evidence" value="ECO:0007669"/>
    <property type="project" value="UniProtKB-UniRule"/>
</dbReference>
<dbReference type="Gene3D" id="3.100.10.10">
    <property type="match status" value="1"/>
</dbReference>
<dbReference type="HAMAP" id="MF_01341">
    <property type="entry name" value="Ribosomal_uL15"/>
    <property type="match status" value="1"/>
</dbReference>
<dbReference type="InterPro" id="IPR030878">
    <property type="entry name" value="Ribosomal_uL15"/>
</dbReference>
<dbReference type="InterPro" id="IPR021131">
    <property type="entry name" value="Ribosomal_uL15/eL18"/>
</dbReference>
<dbReference type="InterPro" id="IPR036227">
    <property type="entry name" value="Ribosomal_uL15/eL18_sf"/>
</dbReference>
<dbReference type="InterPro" id="IPR005749">
    <property type="entry name" value="Ribosomal_uL15_bac-type"/>
</dbReference>
<dbReference type="NCBIfam" id="TIGR01071">
    <property type="entry name" value="rplO_bact"/>
    <property type="match status" value="1"/>
</dbReference>
<dbReference type="PANTHER" id="PTHR12934">
    <property type="entry name" value="50S RIBOSOMAL PROTEIN L15"/>
    <property type="match status" value="1"/>
</dbReference>
<dbReference type="PANTHER" id="PTHR12934:SF11">
    <property type="entry name" value="LARGE RIBOSOMAL SUBUNIT PROTEIN UL15M"/>
    <property type="match status" value="1"/>
</dbReference>
<dbReference type="Pfam" id="PF00828">
    <property type="entry name" value="Ribosomal_L27A"/>
    <property type="match status" value="1"/>
</dbReference>
<dbReference type="SUPFAM" id="SSF52080">
    <property type="entry name" value="Ribosomal proteins L15p and L18e"/>
    <property type="match status" value="1"/>
</dbReference>
<evidence type="ECO:0000255" key="1">
    <source>
        <dbReference type="HAMAP-Rule" id="MF_01341"/>
    </source>
</evidence>
<evidence type="ECO:0000256" key="2">
    <source>
        <dbReference type="SAM" id="MobiDB-lite"/>
    </source>
</evidence>
<evidence type="ECO:0000305" key="3"/>
<comment type="function">
    <text evidence="1">Binds to the 23S rRNA.</text>
</comment>
<comment type="subunit">
    <text evidence="1">Part of the 50S ribosomal subunit.</text>
</comment>
<comment type="similarity">
    <text evidence="1">Belongs to the universal ribosomal protein uL15 family.</text>
</comment>